<comment type="function">
    <text evidence="1">Involved in the biosynthesis of the chorismate, which leads to the biosynthesis of aromatic amino acids. Catalyzes the reversible NADPH linked reduction of 3-dehydroshikimate (DHSA) to yield shikimate (SA).</text>
</comment>
<comment type="catalytic activity">
    <reaction evidence="1">
        <text>shikimate + NADP(+) = 3-dehydroshikimate + NADPH + H(+)</text>
        <dbReference type="Rhea" id="RHEA:17737"/>
        <dbReference type="ChEBI" id="CHEBI:15378"/>
        <dbReference type="ChEBI" id="CHEBI:16630"/>
        <dbReference type="ChEBI" id="CHEBI:36208"/>
        <dbReference type="ChEBI" id="CHEBI:57783"/>
        <dbReference type="ChEBI" id="CHEBI:58349"/>
        <dbReference type="EC" id="1.1.1.25"/>
    </reaction>
</comment>
<comment type="pathway">
    <text evidence="1">Metabolic intermediate biosynthesis; chorismate biosynthesis; chorismate from D-erythrose 4-phosphate and phosphoenolpyruvate: step 4/7.</text>
</comment>
<comment type="subunit">
    <text evidence="1">Homodimer.</text>
</comment>
<comment type="similarity">
    <text evidence="1">Belongs to the shikimate dehydrogenase family.</text>
</comment>
<reference key="1">
    <citation type="journal article" date="2008" name="Genome Biol.">
        <title>A genomic analysis of the archaeal system Ignicoccus hospitalis-Nanoarchaeum equitans.</title>
        <authorList>
            <person name="Podar M."/>
            <person name="Anderson I."/>
            <person name="Makarova K.S."/>
            <person name="Elkins J.G."/>
            <person name="Ivanova N."/>
            <person name="Wall M.A."/>
            <person name="Lykidis A."/>
            <person name="Mavromatis K."/>
            <person name="Sun H."/>
            <person name="Hudson M.E."/>
            <person name="Chen W."/>
            <person name="Deciu C."/>
            <person name="Hutchison D."/>
            <person name="Eads J.R."/>
            <person name="Anderson A."/>
            <person name="Fernandes F."/>
            <person name="Szeto E."/>
            <person name="Lapidus A."/>
            <person name="Kyrpides N.C."/>
            <person name="Saier M.H. Jr."/>
            <person name="Richardson P.M."/>
            <person name="Rachel R."/>
            <person name="Huber H."/>
            <person name="Eisen J.A."/>
            <person name="Koonin E.V."/>
            <person name="Keller M."/>
            <person name="Stetter K.O."/>
        </authorList>
    </citation>
    <scope>NUCLEOTIDE SEQUENCE [LARGE SCALE GENOMIC DNA]</scope>
    <source>
        <strain>KIN4/I / DSM 18386 / JCM 14125</strain>
    </source>
</reference>
<keyword id="KW-0028">Amino-acid biosynthesis</keyword>
<keyword id="KW-0057">Aromatic amino acid biosynthesis</keyword>
<keyword id="KW-0521">NADP</keyword>
<keyword id="KW-0560">Oxidoreductase</keyword>
<keyword id="KW-1185">Reference proteome</keyword>
<dbReference type="EC" id="1.1.1.25" evidence="1"/>
<dbReference type="EMBL" id="CP000816">
    <property type="protein sequence ID" value="ABU81399.1"/>
    <property type="molecule type" value="Genomic_DNA"/>
</dbReference>
<dbReference type="RefSeq" id="WP_011998251.1">
    <property type="nucleotide sequence ID" value="NC_009776.1"/>
</dbReference>
<dbReference type="SMR" id="A8A8Z7"/>
<dbReference type="STRING" id="453591.Igni_0215"/>
<dbReference type="GeneID" id="5562108"/>
<dbReference type="KEGG" id="iho:Igni_0215"/>
<dbReference type="eggNOG" id="arCOG01033">
    <property type="taxonomic scope" value="Archaea"/>
</dbReference>
<dbReference type="HOGENOM" id="CLU_044063_0_1_2"/>
<dbReference type="OrthoDB" id="15360at2157"/>
<dbReference type="PhylomeDB" id="A8A8Z7"/>
<dbReference type="UniPathway" id="UPA00053">
    <property type="reaction ID" value="UER00087"/>
</dbReference>
<dbReference type="Proteomes" id="UP000000262">
    <property type="component" value="Chromosome"/>
</dbReference>
<dbReference type="GO" id="GO:0050661">
    <property type="term" value="F:NADP binding"/>
    <property type="evidence" value="ECO:0007669"/>
    <property type="project" value="InterPro"/>
</dbReference>
<dbReference type="GO" id="GO:0004764">
    <property type="term" value="F:shikimate 3-dehydrogenase (NADP+) activity"/>
    <property type="evidence" value="ECO:0007669"/>
    <property type="project" value="UniProtKB-UniRule"/>
</dbReference>
<dbReference type="GO" id="GO:0008652">
    <property type="term" value="P:amino acid biosynthetic process"/>
    <property type="evidence" value="ECO:0007669"/>
    <property type="project" value="UniProtKB-KW"/>
</dbReference>
<dbReference type="GO" id="GO:0009073">
    <property type="term" value="P:aromatic amino acid family biosynthetic process"/>
    <property type="evidence" value="ECO:0007669"/>
    <property type="project" value="UniProtKB-KW"/>
</dbReference>
<dbReference type="GO" id="GO:0009423">
    <property type="term" value="P:chorismate biosynthetic process"/>
    <property type="evidence" value="ECO:0007669"/>
    <property type="project" value="UniProtKB-UniRule"/>
</dbReference>
<dbReference type="GO" id="GO:0019632">
    <property type="term" value="P:shikimate metabolic process"/>
    <property type="evidence" value="ECO:0007669"/>
    <property type="project" value="InterPro"/>
</dbReference>
<dbReference type="CDD" id="cd01065">
    <property type="entry name" value="NAD_bind_Shikimate_DH"/>
    <property type="match status" value="1"/>
</dbReference>
<dbReference type="Gene3D" id="3.40.50.10860">
    <property type="entry name" value="Leucine Dehydrogenase, chain A, domain 1"/>
    <property type="match status" value="1"/>
</dbReference>
<dbReference type="Gene3D" id="3.40.50.720">
    <property type="entry name" value="NAD(P)-binding Rossmann-like Domain"/>
    <property type="match status" value="1"/>
</dbReference>
<dbReference type="HAMAP" id="MF_00222">
    <property type="entry name" value="Shikimate_DH_AroE"/>
    <property type="match status" value="1"/>
</dbReference>
<dbReference type="InterPro" id="IPR046346">
    <property type="entry name" value="Aminoacid_DH-like_N_sf"/>
</dbReference>
<dbReference type="InterPro" id="IPR036291">
    <property type="entry name" value="NAD(P)-bd_dom_sf"/>
</dbReference>
<dbReference type="InterPro" id="IPR011342">
    <property type="entry name" value="Shikimate_DH"/>
</dbReference>
<dbReference type="InterPro" id="IPR013708">
    <property type="entry name" value="Shikimate_DH-bd_N"/>
</dbReference>
<dbReference type="InterPro" id="IPR022893">
    <property type="entry name" value="Shikimate_DH_fam"/>
</dbReference>
<dbReference type="InterPro" id="IPR006151">
    <property type="entry name" value="Shikm_DH/Glu-tRNA_Rdtase"/>
</dbReference>
<dbReference type="NCBIfam" id="TIGR00507">
    <property type="entry name" value="aroE"/>
    <property type="match status" value="1"/>
</dbReference>
<dbReference type="PANTHER" id="PTHR21089:SF1">
    <property type="entry name" value="BIFUNCTIONAL 3-DEHYDROQUINATE DEHYDRATASE_SHIKIMATE DEHYDROGENASE, CHLOROPLASTIC"/>
    <property type="match status" value="1"/>
</dbReference>
<dbReference type="PANTHER" id="PTHR21089">
    <property type="entry name" value="SHIKIMATE DEHYDROGENASE"/>
    <property type="match status" value="1"/>
</dbReference>
<dbReference type="Pfam" id="PF01488">
    <property type="entry name" value="Shikimate_DH"/>
    <property type="match status" value="1"/>
</dbReference>
<dbReference type="Pfam" id="PF08501">
    <property type="entry name" value="Shikimate_dh_N"/>
    <property type="match status" value="1"/>
</dbReference>
<dbReference type="SUPFAM" id="SSF53223">
    <property type="entry name" value="Aminoacid dehydrogenase-like, N-terminal domain"/>
    <property type="match status" value="1"/>
</dbReference>
<dbReference type="SUPFAM" id="SSF51735">
    <property type="entry name" value="NAD(P)-binding Rossmann-fold domains"/>
    <property type="match status" value="1"/>
</dbReference>
<protein>
    <recommendedName>
        <fullName evidence="1">Shikimate dehydrogenase (NADP(+))</fullName>
        <shortName evidence="1">SDH</shortName>
        <ecNumber evidence="1">1.1.1.25</ecNumber>
    </recommendedName>
</protein>
<proteinExistence type="inferred from homology"/>
<feature type="chain" id="PRO_0000325183" description="Shikimate dehydrogenase (NADP(+))">
    <location>
        <begin position="1"/>
        <end position="262"/>
    </location>
</feature>
<feature type="active site" description="Proton acceptor" evidence="1">
    <location>
        <position position="63"/>
    </location>
</feature>
<feature type="binding site" evidence="1">
    <location>
        <begin position="13"/>
        <end position="15"/>
    </location>
    <ligand>
        <name>shikimate</name>
        <dbReference type="ChEBI" id="CHEBI:36208"/>
    </ligand>
</feature>
<feature type="binding site" evidence="1">
    <location>
        <position position="59"/>
    </location>
    <ligand>
        <name>shikimate</name>
        <dbReference type="ChEBI" id="CHEBI:36208"/>
    </ligand>
</feature>
<feature type="binding site" evidence="1">
    <location>
        <position position="75"/>
    </location>
    <ligand>
        <name>NADP(+)</name>
        <dbReference type="ChEBI" id="CHEBI:58349"/>
    </ligand>
</feature>
<feature type="binding site" evidence="1">
    <location>
        <position position="84"/>
    </location>
    <ligand>
        <name>shikimate</name>
        <dbReference type="ChEBI" id="CHEBI:36208"/>
    </ligand>
</feature>
<feature type="binding site" evidence="1">
    <location>
        <position position="99"/>
    </location>
    <ligand>
        <name>shikimate</name>
        <dbReference type="ChEBI" id="CHEBI:36208"/>
    </ligand>
</feature>
<feature type="binding site" evidence="1">
    <location>
        <begin position="122"/>
        <end position="126"/>
    </location>
    <ligand>
        <name>NADP(+)</name>
        <dbReference type="ChEBI" id="CHEBI:58349"/>
    </ligand>
</feature>
<feature type="binding site" evidence="1">
    <location>
        <begin position="144"/>
        <end position="149"/>
    </location>
    <ligand>
        <name>NADP(+)</name>
        <dbReference type="ChEBI" id="CHEBI:58349"/>
    </ligand>
</feature>
<feature type="binding site" evidence="1">
    <location>
        <position position="205"/>
    </location>
    <ligand>
        <name>NADP(+)</name>
        <dbReference type="ChEBI" id="CHEBI:58349"/>
    </ligand>
</feature>
<feature type="binding site" evidence="1">
    <location>
        <position position="207"/>
    </location>
    <ligand>
        <name>shikimate</name>
        <dbReference type="ChEBI" id="CHEBI:36208"/>
    </ligand>
</feature>
<feature type="binding site" evidence="1">
    <location>
        <position position="228"/>
    </location>
    <ligand>
        <name>NADP(+)</name>
        <dbReference type="ChEBI" id="CHEBI:58349"/>
    </ligand>
</feature>
<name>AROE_IGNH4</name>
<accession>A8A8Z7</accession>
<organism>
    <name type="scientific">Ignicoccus hospitalis (strain KIN4/I / DSM 18386 / JCM 14125)</name>
    <dbReference type="NCBI Taxonomy" id="453591"/>
    <lineage>
        <taxon>Archaea</taxon>
        <taxon>Thermoproteota</taxon>
        <taxon>Thermoprotei</taxon>
        <taxon>Desulfurococcales</taxon>
        <taxon>Desulfurococcaceae</taxon>
        <taxon>Ignicoccus</taxon>
    </lineage>
</organism>
<sequence>MLFAVIGHPIEHSLSPLLHKISFELMKVEAEYVKVDVPPHRLGDFMSSVDMIFNGINVTIPHKVEVLKYVDVADDLVNEVGAANTLKIKDGKIYAFNTDVEGVRGSIKDAVDPKGLKVAVLGAGGAARAAVVALRDEAQVTVFNRTLEKAKRLAEELGVDYAGLNEVDKIKKHDIIINATPVGMDGVSMPIPPDVIESRHVLMDMVYRPLYTPFLKVGLAKGAKTVNGLKMLVIQGMESEKVWLGASPYWRDVYERLLASLA</sequence>
<gene>
    <name evidence="1" type="primary">aroE</name>
    <name type="ordered locus">Igni_0215</name>
</gene>
<evidence type="ECO:0000255" key="1">
    <source>
        <dbReference type="HAMAP-Rule" id="MF_00222"/>
    </source>
</evidence>